<keyword id="KW-0175">Coiled coil</keyword>
<keyword id="KW-0963">Cytoplasm</keyword>
<keyword id="KW-0206">Cytoskeleton</keyword>
<keyword id="KW-0597">Phosphoprotein</keyword>
<keyword id="KW-1185">Reference proteome</keyword>
<protein>
    <recommendedName>
        <fullName>Coiled-coil domain-containing protein 116</fullName>
    </recommendedName>
</protein>
<organism>
    <name type="scientific">Mus musculus</name>
    <name type="common">Mouse</name>
    <dbReference type="NCBI Taxonomy" id="10090"/>
    <lineage>
        <taxon>Eukaryota</taxon>
        <taxon>Metazoa</taxon>
        <taxon>Chordata</taxon>
        <taxon>Craniata</taxon>
        <taxon>Vertebrata</taxon>
        <taxon>Euteleostomi</taxon>
        <taxon>Mammalia</taxon>
        <taxon>Eutheria</taxon>
        <taxon>Euarchontoglires</taxon>
        <taxon>Glires</taxon>
        <taxon>Rodentia</taxon>
        <taxon>Myomorpha</taxon>
        <taxon>Muroidea</taxon>
        <taxon>Muridae</taxon>
        <taxon>Murinae</taxon>
        <taxon>Mus</taxon>
        <taxon>Mus</taxon>
    </lineage>
</organism>
<proteinExistence type="evidence at transcript level"/>
<evidence type="ECO:0000250" key="1">
    <source>
        <dbReference type="UniProtKB" id="Q4V8B5"/>
    </source>
</evidence>
<evidence type="ECO:0000250" key="2">
    <source>
        <dbReference type="UniProtKB" id="Q8IYX3"/>
    </source>
</evidence>
<evidence type="ECO:0000255" key="3"/>
<evidence type="ECO:0000256" key="4">
    <source>
        <dbReference type="SAM" id="MobiDB-lite"/>
    </source>
</evidence>
<evidence type="ECO:0000305" key="5"/>
<accession>Q80X53</accession>
<accession>Q6PFY7</accession>
<accession>Q9D5J4</accession>
<sequence>MARCRHHSGYLADDEAAHSTYVAPLPKKHLLPEMRPTCKLGRVPHLPSMNQYSEHQSHQQNFRHPLAFGGFLDFLTEGQVLDSLQTVVEQATERLAAMKTEAGVPLVDIQDPVEVPSSRHRSRARPSIDTVHRHRARPTLCAGRPNNYPSCSSSMSDSHSSITAGWLGSHSQDSDLGARGIGSLPPMRDKLLLEKNLKRLLRLENKGKILNQSCSQRDSLLWDSLGSQTSSQWTREQPLSWFSGLLGSSPATPETSELGLGEQEMIFLKQKLNKEMKSLLNQPRPFNLPTYCPLREPHHTLDFLAKHRLFPALQRVVSQAVDKLSHACRHNGFPLFPVTSETIPDLPGNSDLLQPSSKASIPTNREARGEPCDSLTTAYSPKTSHRKSKGRRGSPPNAVQMATRFRLKVTPTQVSNVPISSFHSMQEAPNSEPKLQKQAMASNCNHISQPCHGLHLTLPAPGITVEVASCQGRLRGPVQHRLASPCCLHSHFPFPLFPPFLSLGKSFSTSPPTLHPEVTSRAGLEVLEQPLKGRGSFTHHF</sequence>
<feature type="chain" id="PRO_0000254054" description="Coiled-coil domain-containing protein 116">
    <location>
        <begin position="1"/>
        <end position="541"/>
    </location>
</feature>
<feature type="region of interest" description="Disordered" evidence="4">
    <location>
        <begin position="346"/>
        <end position="397"/>
    </location>
</feature>
<feature type="coiled-coil region" evidence="3">
    <location>
        <begin position="79"/>
        <end position="102"/>
    </location>
</feature>
<feature type="compositionally biased region" description="Polar residues" evidence="4">
    <location>
        <begin position="351"/>
        <end position="363"/>
    </location>
</feature>
<feature type="compositionally biased region" description="Basic residues" evidence="4">
    <location>
        <begin position="383"/>
        <end position="392"/>
    </location>
</feature>
<feature type="modified residue" description="Phosphoserine" evidence="1">
    <location>
        <position position="394"/>
    </location>
</feature>
<feature type="sequence conflict" description="In Ref. 2; AAH57359." evidence="5" ref="2">
    <original>R</original>
    <variation>C</variation>
    <location>
        <position position="144"/>
    </location>
</feature>
<feature type="sequence conflict" description="In Ref. 1; BAB29781." evidence="5" ref="1">
    <original>L</original>
    <variation>Q</variation>
    <location>
        <position position="220"/>
    </location>
</feature>
<reference key="1">
    <citation type="journal article" date="2005" name="Science">
        <title>The transcriptional landscape of the mammalian genome.</title>
        <authorList>
            <person name="Carninci P."/>
            <person name="Kasukawa T."/>
            <person name="Katayama S."/>
            <person name="Gough J."/>
            <person name="Frith M.C."/>
            <person name="Maeda N."/>
            <person name="Oyama R."/>
            <person name="Ravasi T."/>
            <person name="Lenhard B."/>
            <person name="Wells C."/>
            <person name="Kodzius R."/>
            <person name="Shimokawa K."/>
            <person name="Bajic V.B."/>
            <person name="Brenner S.E."/>
            <person name="Batalov S."/>
            <person name="Forrest A.R."/>
            <person name="Zavolan M."/>
            <person name="Davis M.J."/>
            <person name="Wilming L.G."/>
            <person name="Aidinis V."/>
            <person name="Allen J.E."/>
            <person name="Ambesi-Impiombato A."/>
            <person name="Apweiler R."/>
            <person name="Aturaliya R.N."/>
            <person name="Bailey T.L."/>
            <person name="Bansal M."/>
            <person name="Baxter L."/>
            <person name="Beisel K.W."/>
            <person name="Bersano T."/>
            <person name="Bono H."/>
            <person name="Chalk A.M."/>
            <person name="Chiu K.P."/>
            <person name="Choudhary V."/>
            <person name="Christoffels A."/>
            <person name="Clutterbuck D.R."/>
            <person name="Crowe M.L."/>
            <person name="Dalla E."/>
            <person name="Dalrymple B.P."/>
            <person name="de Bono B."/>
            <person name="Della Gatta G."/>
            <person name="di Bernardo D."/>
            <person name="Down T."/>
            <person name="Engstrom P."/>
            <person name="Fagiolini M."/>
            <person name="Faulkner G."/>
            <person name="Fletcher C.F."/>
            <person name="Fukushima T."/>
            <person name="Furuno M."/>
            <person name="Futaki S."/>
            <person name="Gariboldi M."/>
            <person name="Georgii-Hemming P."/>
            <person name="Gingeras T.R."/>
            <person name="Gojobori T."/>
            <person name="Green R.E."/>
            <person name="Gustincich S."/>
            <person name="Harbers M."/>
            <person name="Hayashi Y."/>
            <person name="Hensch T.K."/>
            <person name="Hirokawa N."/>
            <person name="Hill D."/>
            <person name="Huminiecki L."/>
            <person name="Iacono M."/>
            <person name="Ikeo K."/>
            <person name="Iwama A."/>
            <person name="Ishikawa T."/>
            <person name="Jakt M."/>
            <person name="Kanapin A."/>
            <person name="Katoh M."/>
            <person name="Kawasawa Y."/>
            <person name="Kelso J."/>
            <person name="Kitamura H."/>
            <person name="Kitano H."/>
            <person name="Kollias G."/>
            <person name="Krishnan S.P."/>
            <person name="Kruger A."/>
            <person name="Kummerfeld S.K."/>
            <person name="Kurochkin I.V."/>
            <person name="Lareau L.F."/>
            <person name="Lazarevic D."/>
            <person name="Lipovich L."/>
            <person name="Liu J."/>
            <person name="Liuni S."/>
            <person name="McWilliam S."/>
            <person name="Madan Babu M."/>
            <person name="Madera M."/>
            <person name="Marchionni L."/>
            <person name="Matsuda H."/>
            <person name="Matsuzawa S."/>
            <person name="Miki H."/>
            <person name="Mignone F."/>
            <person name="Miyake S."/>
            <person name="Morris K."/>
            <person name="Mottagui-Tabar S."/>
            <person name="Mulder N."/>
            <person name="Nakano N."/>
            <person name="Nakauchi H."/>
            <person name="Ng P."/>
            <person name="Nilsson R."/>
            <person name="Nishiguchi S."/>
            <person name="Nishikawa S."/>
            <person name="Nori F."/>
            <person name="Ohara O."/>
            <person name="Okazaki Y."/>
            <person name="Orlando V."/>
            <person name="Pang K.C."/>
            <person name="Pavan W.J."/>
            <person name="Pavesi G."/>
            <person name="Pesole G."/>
            <person name="Petrovsky N."/>
            <person name="Piazza S."/>
            <person name="Reed J."/>
            <person name="Reid J.F."/>
            <person name="Ring B.Z."/>
            <person name="Ringwald M."/>
            <person name="Rost B."/>
            <person name="Ruan Y."/>
            <person name="Salzberg S.L."/>
            <person name="Sandelin A."/>
            <person name="Schneider C."/>
            <person name="Schoenbach C."/>
            <person name="Sekiguchi K."/>
            <person name="Semple C.A."/>
            <person name="Seno S."/>
            <person name="Sessa L."/>
            <person name="Sheng Y."/>
            <person name="Shibata Y."/>
            <person name="Shimada H."/>
            <person name="Shimada K."/>
            <person name="Silva D."/>
            <person name="Sinclair B."/>
            <person name="Sperling S."/>
            <person name="Stupka E."/>
            <person name="Sugiura K."/>
            <person name="Sultana R."/>
            <person name="Takenaka Y."/>
            <person name="Taki K."/>
            <person name="Tammoja K."/>
            <person name="Tan S.L."/>
            <person name="Tang S."/>
            <person name="Taylor M.S."/>
            <person name="Tegner J."/>
            <person name="Teichmann S.A."/>
            <person name="Ueda H.R."/>
            <person name="van Nimwegen E."/>
            <person name="Verardo R."/>
            <person name="Wei C.L."/>
            <person name="Yagi K."/>
            <person name="Yamanishi H."/>
            <person name="Zabarovsky E."/>
            <person name="Zhu S."/>
            <person name="Zimmer A."/>
            <person name="Hide W."/>
            <person name="Bult C."/>
            <person name="Grimmond S.M."/>
            <person name="Teasdale R.D."/>
            <person name="Liu E.T."/>
            <person name="Brusic V."/>
            <person name="Quackenbush J."/>
            <person name="Wahlestedt C."/>
            <person name="Mattick J.S."/>
            <person name="Hume D.A."/>
            <person name="Kai C."/>
            <person name="Sasaki D."/>
            <person name="Tomaru Y."/>
            <person name="Fukuda S."/>
            <person name="Kanamori-Katayama M."/>
            <person name="Suzuki M."/>
            <person name="Aoki J."/>
            <person name="Arakawa T."/>
            <person name="Iida J."/>
            <person name="Imamura K."/>
            <person name="Itoh M."/>
            <person name="Kato T."/>
            <person name="Kawaji H."/>
            <person name="Kawagashira N."/>
            <person name="Kawashima T."/>
            <person name="Kojima M."/>
            <person name="Kondo S."/>
            <person name="Konno H."/>
            <person name="Nakano K."/>
            <person name="Ninomiya N."/>
            <person name="Nishio T."/>
            <person name="Okada M."/>
            <person name="Plessy C."/>
            <person name="Shibata K."/>
            <person name="Shiraki T."/>
            <person name="Suzuki S."/>
            <person name="Tagami M."/>
            <person name="Waki K."/>
            <person name="Watahiki A."/>
            <person name="Okamura-Oho Y."/>
            <person name="Suzuki H."/>
            <person name="Kawai J."/>
            <person name="Hayashizaki Y."/>
        </authorList>
    </citation>
    <scope>NUCLEOTIDE SEQUENCE [LARGE SCALE MRNA]</scope>
    <source>
        <strain>C57BL/6J</strain>
        <tissue>Brain</tissue>
        <tissue>Testis</tissue>
    </source>
</reference>
<reference key="2">
    <citation type="journal article" date="2004" name="Genome Res.">
        <title>The status, quality, and expansion of the NIH full-length cDNA project: the Mammalian Gene Collection (MGC).</title>
        <authorList>
            <consortium name="The MGC Project Team"/>
        </authorList>
    </citation>
    <scope>NUCLEOTIDE SEQUENCE [LARGE SCALE MRNA]</scope>
    <source>
        <strain>C57BL/6J</strain>
        <tissue>Brain</tissue>
    </source>
</reference>
<name>CC116_MOUSE</name>
<comment type="subcellular location">
    <subcellularLocation>
        <location evidence="2">Cytoplasm</location>
        <location evidence="2">Cytoskeleton</location>
        <location evidence="2">Microtubule organizing center</location>
        <location evidence="2">Centrosome</location>
    </subcellularLocation>
</comment>
<dbReference type="EMBL" id="AK015290">
    <property type="protein sequence ID" value="BAB29781.1"/>
    <property type="molecule type" value="mRNA"/>
</dbReference>
<dbReference type="EMBL" id="BC050881">
    <property type="protein sequence ID" value="AAH50881.1"/>
    <property type="molecule type" value="mRNA"/>
</dbReference>
<dbReference type="EMBL" id="BC057359">
    <property type="protein sequence ID" value="AAH57359.1"/>
    <property type="molecule type" value="mRNA"/>
</dbReference>
<dbReference type="CCDS" id="CCDS27995.1"/>
<dbReference type="RefSeq" id="NP_001293098.1">
    <property type="nucleotide sequence ID" value="NM_001306169.1"/>
</dbReference>
<dbReference type="RefSeq" id="NP_084055.2">
    <property type="nucleotide sequence ID" value="NM_029779.2"/>
</dbReference>
<dbReference type="RefSeq" id="XP_017172647.1">
    <property type="nucleotide sequence ID" value="XM_017317158.3"/>
</dbReference>
<dbReference type="SMR" id="Q80X53"/>
<dbReference type="FunCoup" id="Q80X53">
    <property type="interactions" value="44"/>
</dbReference>
<dbReference type="STRING" id="10090.ENSMUSP00000023452"/>
<dbReference type="GlyGen" id="Q80X53">
    <property type="glycosylation" value="1 site"/>
</dbReference>
<dbReference type="iPTMnet" id="Q80X53"/>
<dbReference type="PhosphoSitePlus" id="Q80X53"/>
<dbReference type="PaxDb" id="10090-ENSMUSP00000111376"/>
<dbReference type="ProteomicsDB" id="279938"/>
<dbReference type="Antibodypedia" id="218">
    <property type="antibodies" value="65 antibodies from 12 providers"/>
</dbReference>
<dbReference type="DNASU" id="76872"/>
<dbReference type="Ensembl" id="ENSMUST00000023452.16">
    <property type="protein sequence ID" value="ENSMUSP00000023452.8"/>
    <property type="gene ID" value="ENSMUSG00000022768.18"/>
</dbReference>
<dbReference type="Ensembl" id="ENSMUST00000115711.10">
    <property type="protein sequence ID" value="ENSMUSP00000111376.2"/>
    <property type="gene ID" value="ENSMUSG00000022768.18"/>
</dbReference>
<dbReference type="Ensembl" id="ENSMUST00000232033.2">
    <property type="protein sequence ID" value="ENSMUSP00000155923.2"/>
    <property type="gene ID" value="ENSMUSG00000022768.18"/>
</dbReference>
<dbReference type="GeneID" id="76872"/>
<dbReference type="KEGG" id="mmu:76872"/>
<dbReference type="UCSC" id="uc007ykd.1">
    <property type="organism name" value="mouse"/>
</dbReference>
<dbReference type="AGR" id="MGI:1924122"/>
<dbReference type="CTD" id="164592"/>
<dbReference type="MGI" id="MGI:1924122">
    <property type="gene designation" value="Ccdc116"/>
</dbReference>
<dbReference type="VEuPathDB" id="HostDB:ENSMUSG00000022768"/>
<dbReference type="eggNOG" id="ENOG502STQK">
    <property type="taxonomic scope" value="Eukaryota"/>
</dbReference>
<dbReference type="GeneTree" id="ENSGT00390000002259"/>
<dbReference type="HOGENOM" id="CLU_022190_1_0_1"/>
<dbReference type="InParanoid" id="Q80X53"/>
<dbReference type="OMA" id="PCHSLYT"/>
<dbReference type="OrthoDB" id="9837963at2759"/>
<dbReference type="PhylomeDB" id="Q80X53"/>
<dbReference type="TreeFam" id="TF337163"/>
<dbReference type="BioGRID-ORCS" id="76872">
    <property type="hits" value="2 hits in 77 CRISPR screens"/>
</dbReference>
<dbReference type="PRO" id="PR:Q80X53"/>
<dbReference type="Proteomes" id="UP000000589">
    <property type="component" value="Chromosome 16"/>
</dbReference>
<dbReference type="RNAct" id="Q80X53">
    <property type="molecule type" value="protein"/>
</dbReference>
<dbReference type="Bgee" id="ENSMUSG00000022768">
    <property type="expression patterns" value="Expressed in spermatid and 42 other cell types or tissues"/>
</dbReference>
<dbReference type="ExpressionAtlas" id="Q80X53">
    <property type="expression patterns" value="baseline and differential"/>
</dbReference>
<dbReference type="GO" id="GO:0005813">
    <property type="term" value="C:centrosome"/>
    <property type="evidence" value="ECO:0000250"/>
    <property type="project" value="UniProtKB"/>
</dbReference>
<dbReference type="GO" id="GO:0005737">
    <property type="term" value="C:cytoplasm"/>
    <property type="evidence" value="ECO:0007669"/>
    <property type="project" value="UniProtKB-KW"/>
</dbReference>
<dbReference type="InterPro" id="IPR031532">
    <property type="entry name" value="DUF4702"/>
</dbReference>
<dbReference type="PANTHER" id="PTHR36861">
    <property type="entry name" value="COILED-COIL DOMAIN-CONTAINING PROTEIN 116"/>
    <property type="match status" value="1"/>
</dbReference>
<dbReference type="PANTHER" id="PTHR36861:SF1">
    <property type="entry name" value="COILED-COIL DOMAIN-CONTAINING PROTEIN 116"/>
    <property type="match status" value="1"/>
</dbReference>
<dbReference type="Pfam" id="PF15774">
    <property type="entry name" value="DUF4702"/>
    <property type="match status" value="1"/>
</dbReference>
<gene>
    <name type="primary">Ccdc116</name>
</gene>